<protein>
    <recommendedName>
        <fullName>Respiratory supercomplex factor 2, mitochondrial</fullName>
    </recommendedName>
    <alternativeName>
        <fullName>Altered inheritance of mitochondria protein 38</fullName>
    </alternativeName>
</protein>
<reference key="1">
    <citation type="journal article" date="1997" name="Nature">
        <title>The nucleotide sequence of Saccharomyces cerevisiae chromosome XIV and its evolutionary implications.</title>
        <authorList>
            <person name="Philippsen P."/>
            <person name="Kleine K."/>
            <person name="Poehlmann R."/>
            <person name="Duesterhoeft A."/>
            <person name="Hamberg K."/>
            <person name="Hegemann J.H."/>
            <person name="Obermaier B."/>
            <person name="Urrestarazu L.A."/>
            <person name="Aert R."/>
            <person name="Albermann K."/>
            <person name="Altmann R."/>
            <person name="Andre B."/>
            <person name="Baladron V."/>
            <person name="Ballesta J.P.G."/>
            <person name="Becam A.-M."/>
            <person name="Beinhauer J.D."/>
            <person name="Boskovic J."/>
            <person name="Buitrago M.J."/>
            <person name="Bussereau F."/>
            <person name="Coster F."/>
            <person name="Crouzet M."/>
            <person name="D'Angelo M."/>
            <person name="Dal Pero F."/>
            <person name="De Antoni A."/>
            <person name="del Rey F."/>
            <person name="Doignon F."/>
            <person name="Domdey H."/>
            <person name="Dubois E."/>
            <person name="Fiedler T.A."/>
            <person name="Fleig U."/>
            <person name="Floeth M."/>
            <person name="Fritz C."/>
            <person name="Gaillardin C."/>
            <person name="Garcia-Cantalejo J.M."/>
            <person name="Glansdorff N."/>
            <person name="Goffeau A."/>
            <person name="Gueldener U."/>
            <person name="Herbert C.J."/>
            <person name="Heumann K."/>
            <person name="Heuss-Neitzel D."/>
            <person name="Hilbert H."/>
            <person name="Hinni K."/>
            <person name="Iraqui Houssaini I."/>
            <person name="Jacquet M."/>
            <person name="Jimenez A."/>
            <person name="Jonniaux J.-L."/>
            <person name="Karpfinger-Hartl L."/>
            <person name="Lanfranchi G."/>
            <person name="Lepingle A."/>
            <person name="Levesque H."/>
            <person name="Lyck R."/>
            <person name="Maftahi M."/>
            <person name="Mallet L."/>
            <person name="Maurer C.T.C."/>
            <person name="Messenguy F."/>
            <person name="Mewes H.-W."/>
            <person name="Moestl D."/>
            <person name="Nasr F."/>
            <person name="Nicaud J.-M."/>
            <person name="Niedenthal R.K."/>
            <person name="Pandolfo D."/>
            <person name="Pierard A."/>
            <person name="Piravandi E."/>
            <person name="Planta R.J."/>
            <person name="Pohl T.M."/>
            <person name="Purnelle B."/>
            <person name="Rebischung C."/>
            <person name="Remacha M.A."/>
            <person name="Revuelta J.L."/>
            <person name="Rinke M."/>
            <person name="Saiz J.E."/>
            <person name="Sartorello F."/>
            <person name="Scherens B."/>
            <person name="Sen-Gupta M."/>
            <person name="Soler-Mira A."/>
            <person name="Urbanus J.H.M."/>
            <person name="Valle G."/>
            <person name="Van Dyck L."/>
            <person name="Verhasselt P."/>
            <person name="Vierendeels F."/>
            <person name="Vissers S."/>
            <person name="Voet M."/>
            <person name="Volckaert G."/>
            <person name="Wach A."/>
            <person name="Wambutt R."/>
            <person name="Wedler H."/>
            <person name="Zollner A."/>
            <person name="Hani J."/>
        </authorList>
    </citation>
    <scope>NUCLEOTIDE SEQUENCE [LARGE SCALE GENOMIC DNA]</scope>
    <source>
        <strain>ATCC 204508 / S288c</strain>
    </source>
</reference>
<reference key="2">
    <citation type="journal article" date="2014" name="G3 (Bethesda)">
        <title>The reference genome sequence of Saccharomyces cerevisiae: Then and now.</title>
        <authorList>
            <person name="Engel S.R."/>
            <person name="Dietrich F.S."/>
            <person name="Fisk D.G."/>
            <person name="Binkley G."/>
            <person name="Balakrishnan R."/>
            <person name="Costanzo M.C."/>
            <person name="Dwight S.S."/>
            <person name="Hitz B.C."/>
            <person name="Karra K."/>
            <person name="Nash R.S."/>
            <person name="Weng S."/>
            <person name="Wong E.D."/>
            <person name="Lloyd P."/>
            <person name="Skrzypek M.S."/>
            <person name="Miyasato S.R."/>
            <person name="Simison M."/>
            <person name="Cherry J.M."/>
        </authorList>
    </citation>
    <scope>GENOME REANNOTATION</scope>
    <source>
        <strain>ATCC 204508 / S288c</strain>
    </source>
</reference>
<reference key="3">
    <citation type="journal article" date="2003" name="Nature">
        <title>Global analysis of protein localization in budding yeast.</title>
        <authorList>
            <person name="Huh W.-K."/>
            <person name="Falvo J.V."/>
            <person name="Gerke L.C."/>
            <person name="Carroll A.S."/>
            <person name="Howson R.W."/>
            <person name="Weissman J.S."/>
            <person name="O'Shea E.K."/>
        </authorList>
    </citation>
    <scope>SUBCELLULAR LOCATION [LARGE SCALE ANALYSIS]</scope>
</reference>
<reference key="4">
    <citation type="journal article" date="2003" name="Nature">
        <title>Global analysis of protein expression in yeast.</title>
        <authorList>
            <person name="Ghaemmaghami S."/>
            <person name="Huh W.-K."/>
            <person name="Bower K."/>
            <person name="Howson R.W."/>
            <person name="Belle A."/>
            <person name="Dephoure N."/>
            <person name="O'Shea E.K."/>
            <person name="Weissman J.S."/>
        </authorList>
    </citation>
    <scope>LEVEL OF PROTEIN EXPRESSION [LARGE SCALE ANALYSIS]</scope>
</reference>
<reference key="5">
    <citation type="journal article" date="2003" name="Proc. Natl. Acad. Sci. U.S.A.">
        <title>The proteome of Saccharomyces cerevisiae mitochondria.</title>
        <authorList>
            <person name="Sickmann A."/>
            <person name="Reinders J."/>
            <person name="Wagner Y."/>
            <person name="Joppich C."/>
            <person name="Zahedi R.P."/>
            <person name="Meyer H.E."/>
            <person name="Schoenfisch B."/>
            <person name="Perschil I."/>
            <person name="Chacinska A."/>
            <person name="Guiard B."/>
            <person name="Rehling P."/>
            <person name="Pfanner N."/>
            <person name="Meisinger C."/>
        </authorList>
    </citation>
    <scope>SUBCELLULAR LOCATION [LARGE SCALE ANALYSIS]</scope>
    <source>
        <strain>ATCC 76625 / YPH499</strain>
    </source>
</reference>
<reference key="6">
    <citation type="journal article" date="2009" name="PLoS Genet.">
        <title>Computationally driven, quantitative experiments discover genes required for mitochondrial biogenesis.</title>
        <authorList>
            <person name="Hess D.C."/>
            <person name="Myers C.L."/>
            <person name="Huttenhower C."/>
            <person name="Hibbs M.A."/>
            <person name="Hayes A.P."/>
            <person name="Paw J."/>
            <person name="Clore J.J."/>
            <person name="Mendoza R.M."/>
            <person name="Luis B.S."/>
            <person name="Nislow C."/>
            <person name="Giaever G."/>
            <person name="Costanzo M."/>
            <person name="Troyanskaya O.G."/>
            <person name="Caudy A.A."/>
        </authorList>
    </citation>
    <scope>DISRUPTION PHENOTYPE</scope>
</reference>
<reference key="7">
    <citation type="journal article" date="2009" name="Proteomics">
        <title>A three-way proteomics strategy allows differential analysis of yeast mitochondrial membrane protein complexes under anaerobic and aerobic conditions.</title>
        <authorList>
            <person name="Helbig A.O."/>
            <person name="de Groot M.J."/>
            <person name="van Gestel R.A."/>
            <person name="Mohammed S."/>
            <person name="de Hulster E.A."/>
            <person name="Luttik M.A."/>
            <person name="Daran-Lapujade P."/>
            <person name="Pronk J.T."/>
            <person name="Heck A.J."/>
            <person name="Slijper M."/>
        </authorList>
    </citation>
    <scope>ASSOCIATION WITH THE RESPIRATORY CHAIN COMPLEX IV</scope>
</reference>
<reference key="8">
    <citation type="journal article" date="2012" name="Cell Metab.">
        <title>Rcf1 mediates cytochrome oxidase assembly and respirasome formation, revealing heterogeneity of the enzyme complex.</title>
        <authorList>
            <person name="Vukotic M."/>
            <person name="Oeljeklaus S."/>
            <person name="Wiese S."/>
            <person name="Vogtle F.N."/>
            <person name="Meisinger C."/>
            <person name="Meyer H.E."/>
            <person name="Zieseniss A."/>
            <person name="Katschinski D.M."/>
            <person name="Jans D.C."/>
            <person name="Jakobs S."/>
            <person name="Warscheid B."/>
            <person name="Rehling P."/>
            <person name="Deckers M."/>
        </authorList>
    </citation>
    <scope>FUNCTION</scope>
    <scope>ASSOCIATION WITH THE RESPIRATORY CHAIN COMPLEX III/COMPLEX IV SUPERCOMPLEX</scope>
</reference>
<reference key="9">
    <citation type="journal article" date="2012" name="Mol. Cell. Biol.">
        <title>Rcf1 and Rcf2, members of the hypoxia-induced gene 1 protein family, are critical components of the mitochondrial cytochrome bc1-cytochrome c oxidase supercomplex.</title>
        <authorList>
            <person name="Strogolova V."/>
            <person name="Furness A."/>
            <person name="Robb-McGrath M."/>
            <person name="Garlich J."/>
            <person name="Stuart R.A."/>
        </authorList>
    </citation>
    <scope>FUNCTION</scope>
    <scope>ASSOCIATION WITH THE RESPIRATORY CHAIN COMPLEX III/COMPLEX IV SUPERCOMPLEX</scope>
</reference>
<reference key="10">
    <citation type="journal article" date="2012" name="Proc. Natl. Acad. Sci. U.S.A.">
        <title>N-terminal acetylome analyses and functional insights of the N-terminal acetyltransferase NatB.</title>
        <authorList>
            <person name="Van Damme P."/>
            <person name="Lasa M."/>
            <person name="Polevoda B."/>
            <person name="Gazquez C."/>
            <person name="Elosegui-Artola A."/>
            <person name="Kim D.S."/>
            <person name="De Juan-Pardo E."/>
            <person name="Demeyer K."/>
            <person name="Hole K."/>
            <person name="Larrea E."/>
            <person name="Timmerman E."/>
            <person name="Prieto J."/>
            <person name="Arnesen T."/>
            <person name="Sherman F."/>
            <person name="Gevaert K."/>
            <person name="Aldabe R."/>
        </authorList>
    </citation>
    <scope>IDENTIFICATION BY MASS SPECTROMETRY [LARGE SCALE ANALYSIS]</scope>
</reference>
<reference key="11">
    <citation type="journal article" date="2019" name="J. Biol. Chem.">
        <title>The yeast mitochondrial proteins Rcf1 and Rcf2 support the enzymology of the cytochrome c oxidase complex and generation of the proton motive force.</title>
        <authorList>
            <person name="Strogolova V."/>
            <person name="Hoang N.H."/>
            <person name="Hosler J."/>
            <person name="Stuart R.A."/>
        </authorList>
    </citation>
    <scope>FUNCTION</scope>
</reference>
<reference key="12">
    <citation type="journal article" date="2019" name="J. Biol. Chem.">
        <title>Hypoxia-inducible gene domain 1 proteins in yeast mitochondria protect against proton leak through complex IV.</title>
        <authorList>
            <person name="Hoang N.H."/>
            <person name="Strogolova V."/>
            <person name="Mosley J.J."/>
            <person name="Stuart R.A."/>
            <person name="Hosler J."/>
        </authorList>
    </citation>
    <scope>FUNCTION</scope>
</reference>
<reference key="13">
    <citation type="journal article" date="2019" name="Nat. Struct. Mol. Biol.">
        <title>Structure of yeast cytochrome c oxidase in a supercomplex with cytochrome bc1.</title>
        <authorList>
            <person name="Hartley A.M."/>
            <person name="Lukoyanova N."/>
            <person name="Zhang Y."/>
            <person name="Cabrera-Orefice A."/>
            <person name="Arnold S."/>
            <person name="Meunier B."/>
            <person name="Pinotsis N."/>
            <person name="Marechal A."/>
        </authorList>
    </citation>
    <scope>IDENTIFICATION BY MASS SPECTROMETRY</scope>
</reference>
<reference key="14">
    <citation type="journal article" date="2018" name="ChemBioChem">
        <title>NMR study of Rcf2 reveals an unusual dimeric topology in detergent micelles.</title>
        <authorList>
            <person name="Zhou S."/>
            <person name="Pettersson P."/>
            <person name="Brzezinski P."/>
            <person name="Aedelroth P."/>
            <person name="Maeler L."/>
        </authorList>
    </citation>
    <scope>STRUCTURE BY NMR</scope>
    <scope>TOPOLOGY</scope>
</reference>
<evidence type="ECO:0000250" key="1">
    <source>
        <dbReference type="UniProtKB" id="Q03713"/>
    </source>
</evidence>
<evidence type="ECO:0000255" key="2">
    <source>
        <dbReference type="PROSITE-ProRule" id="PRU00836"/>
    </source>
</evidence>
<evidence type="ECO:0000269" key="3">
    <source>
    </source>
</evidence>
<evidence type="ECO:0000269" key="4">
    <source>
    </source>
</evidence>
<evidence type="ECO:0000269" key="5">
    <source>
    </source>
</evidence>
<evidence type="ECO:0000269" key="6">
    <source>
    </source>
</evidence>
<evidence type="ECO:0000269" key="7">
    <source>
    </source>
</evidence>
<evidence type="ECO:0000269" key="8">
    <source>
    </source>
</evidence>
<evidence type="ECO:0000269" key="9">
    <source>
    </source>
</evidence>
<evidence type="ECO:0000269" key="10">
    <source>
    </source>
</evidence>
<evidence type="ECO:0000269" key="11">
    <source>
    </source>
</evidence>
<evidence type="ECO:0000269" key="12">
    <source>
    </source>
</evidence>
<evidence type="ECO:0007829" key="13">
    <source>
        <dbReference type="PDB" id="6LUL"/>
    </source>
</evidence>
<evidence type="ECO:0007829" key="14">
    <source>
        <dbReference type="PDB" id="6T0B"/>
    </source>
</evidence>
<proteinExistence type="evidence at protein level"/>
<comment type="function">
    <text evidence="8 9 11 12">Assembly factor that plays a role in the assembly of the respiratory chain supercomplexes (SCs) composed of ubiquinol-cytochrome c oxidoreductase (cytochrome b-c1 complex, complex III, CIII) and cytochrome c oxidase (complex IV, CIV). May be required for late-stage assembly of the COX12 and COX13 subunits (PubMed:22310663, PubMed:22342701). Required for the generation and maintenance of a normal proton motive force (PMF) across the inner mitochondrial membrane (IMM) by preventing proton leakage through an inactive population of CIV that accumulates when RCF1 and/or RCF2 proteins are absent (PubMed:30683696, PubMed:31591265).</text>
</comment>
<comment type="subunit">
    <text evidence="7 8 9">Associates with a subpopulation of the cytochrome bc1-cytochrome c oxidase supercomplexes (PubMed:19750512, PubMed:22310663, PubMed:22342701). Associates in substoichiometric amounts with complex IV (PubMed:22310663). Interacts with COX3 (PubMed:22310663).</text>
</comment>
<comment type="subcellular location">
    <subcellularLocation>
        <location evidence="2 3 5">Mitochondrion membrane</location>
        <topology evidence="2 3 5">Multi-pass membrane protein</topology>
    </subcellularLocation>
</comment>
<comment type="disruption phenotype">
    <text evidence="6">Increases frequency of mitochondrial genome loss.</text>
</comment>
<comment type="miscellaneous">
    <text evidence="4">Present with 12000 molecules/cell in log phase SD medium.</text>
</comment>
<keyword id="KW-0002">3D-structure</keyword>
<keyword id="KW-0472">Membrane</keyword>
<keyword id="KW-0496">Mitochondrion</keyword>
<keyword id="KW-1185">Reference proteome</keyword>
<keyword id="KW-0812">Transmembrane</keyword>
<keyword id="KW-1133">Transmembrane helix</keyword>
<accession>P53721</accession>
<accession>D6W1J3</accession>
<feature type="chain" id="PRO_0000215780" description="Respiratory supercomplex factor 2, mitochondrial">
    <location>
        <begin position="1"/>
        <end position="224"/>
    </location>
</feature>
<feature type="topological domain" description="Mitochondrial intermembrane" evidence="1">
    <location>
        <begin position="1"/>
        <end position="13"/>
    </location>
</feature>
<feature type="transmembrane region" description="Helical; Name=1" evidence="10">
    <location>
        <begin position="14"/>
        <end position="38"/>
    </location>
</feature>
<feature type="topological domain" description="Mitochondrial matrix" evidence="1">
    <location>
        <begin position="39"/>
        <end position="47"/>
    </location>
</feature>
<feature type="transmembrane region" description="Helical; Name=2" evidence="10">
    <location>
        <begin position="48"/>
        <end position="75"/>
    </location>
</feature>
<feature type="topological domain" description="Mitochondrial intermembrane" evidence="1">
    <location>
        <begin position="76"/>
        <end position="103"/>
    </location>
</feature>
<feature type="transmembrane region" description="Helical; Name=3" evidence="10">
    <location>
        <begin position="104"/>
        <end position="133"/>
    </location>
</feature>
<feature type="topological domain" description="Mitochondrial matrix" evidence="1">
    <location>
        <begin position="134"/>
        <end position="142"/>
    </location>
</feature>
<feature type="transmembrane region" description="Helical; Name=4" evidence="10">
    <location>
        <begin position="143"/>
        <end position="173"/>
    </location>
</feature>
<feature type="topological domain" description="Mitochondrial intermembrane" evidence="1">
    <location>
        <begin position="174"/>
        <end position="184"/>
    </location>
</feature>
<feature type="transmembrane region" description="Helical; Name=5" evidence="10">
    <location>
        <begin position="185"/>
        <end position="204"/>
    </location>
</feature>
<feature type="topological domain" description="Mitochondrial matrix" evidence="1">
    <location>
        <begin position="205"/>
        <end position="224"/>
    </location>
</feature>
<feature type="domain" description="HIG1" evidence="2">
    <location>
        <begin position="89"/>
        <end position="180"/>
    </location>
</feature>
<feature type="helix" evidence="13">
    <location>
        <begin position="13"/>
        <end position="16"/>
    </location>
</feature>
<feature type="helix" evidence="13">
    <location>
        <begin position="17"/>
        <end position="41"/>
    </location>
</feature>
<feature type="helix" evidence="13">
    <location>
        <begin position="48"/>
        <end position="54"/>
    </location>
</feature>
<feature type="helix" evidence="13">
    <location>
        <begin position="56"/>
        <end position="65"/>
    </location>
</feature>
<feature type="helix" evidence="13">
    <location>
        <begin position="67"/>
        <end position="75"/>
    </location>
</feature>
<feature type="strand" evidence="13">
    <location>
        <begin position="80"/>
        <end position="82"/>
    </location>
</feature>
<feature type="helix" evidence="13">
    <location>
        <begin position="90"/>
        <end position="99"/>
    </location>
</feature>
<feature type="helix" evidence="13">
    <location>
        <begin position="104"/>
        <end position="107"/>
    </location>
</feature>
<feature type="turn" evidence="14">
    <location>
        <begin position="109"/>
        <end position="113"/>
    </location>
</feature>
<feature type="strand" evidence="14">
    <location>
        <begin position="114"/>
        <end position="116"/>
    </location>
</feature>
<feature type="helix" evidence="14">
    <location>
        <begin position="119"/>
        <end position="136"/>
    </location>
</feature>
<feature type="helix" evidence="14">
    <location>
        <begin position="143"/>
        <end position="172"/>
    </location>
</feature>
<feature type="strand" evidence="14">
    <location>
        <begin position="175"/>
        <end position="178"/>
    </location>
</feature>
<feature type="turn" evidence="14">
    <location>
        <begin position="179"/>
        <end position="183"/>
    </location>
</feature>
<feature type="helix" evidence="14">
    <location>
        <begin position="184"/>
        <end position="203"/>
    </location>
</feature>
<feature type="helix" evidence="13">
    <location>
        <begin position="211"/>
        <end position="220"/>
    </location>
</feature>
<organism>
    <name type="scientific">Saccharomyces cerevisiae (strain ATCC 204508 / S288c)</name>
    <name type="common">Baker's yeast</name>
    <dbReference type="NCBI Taxonomy" id="559292"/>
    <lineage>
        <taxon>Eukaryota</taxon>
        <taxon>Fungi</taxon>
        <taxon>Dikarya</taxon>
        <taxon>Ascomycota</taxon>
        <taxon>Saccharomycotina</taxon>
        <taxon>Saccharomycetes</taxon>
        <taxon>Saccharomycetales</taxon>
        <taxon>Saccharomycetaceae</taxon>
        <taxon>Saccharomyces</taxon>
    </lineage>
</organism>
<gene>
    <name type="primary">RCF2</name>
    <name type="synonym">AIM38</name>
    <name type="ordered locus">YNR018W</name>
    <name type="ORF">N3185</name>
</gene>
<name>RCF2_YEAST</name>
<sequence>MKILTQDEIEAHRSHTLKGGIEGALAGFAISAIIFKVLPRRYPKFKPSTLTWSIKTALWITPPTVLTAICAEEASNNFDATMYGSGSSSEDALDEHRRWKSLSTKDKFVEGLSNNKYKIITGAWAASLYGSWVIVNKDPIMTKAQKIVQARMYAQFITVGLLLASVGLSMYENKLHPNKQKVNEMRRWENALRVAEEEERLEKEGRRTGYVSNEERINSKIFKS</sequence>
<dbReference type="EMBL" id="Z71633">
    <property type="protein sequence ID" value="CAA96297.1"/>
    <property type="molecule type" value="Genomic_DNA"/>
</dbReference>
<dbReference type="EMBL" id="BK006947">
    <property type="protein sequence ID" value="DAA10559.1"/>
    <property type="molecule type" value="Genomic_DNA"/>
</dbReference>
<dbReference type="PIR" id="S63349">
    <property type="entry name" value="S63349"/>
</dbReference>
<dbReference type="RefSeq" id="NP_014415.1">
    <property type="nucleotide sequence ID" value="NM_001183195.1"/>
</dbReference>
<dbReference type="PDB" id="6LUL">
    <property type="method" value="NMR"/>
    <property type="chains" value="A/B=1-224"/>
</dbReference>
<dbReference type="PDB" id="6T0B">
    <property type="method" value="EM"/>
    <property type="resolution" value="2.80 A"/>
    <property type="chains" value="m/z=1-224"/>
</dbReference>
<dbReference type="PDB" id="6T15">
    <property type="method" value="EM"/>
    <property type="resolution" value="3.29 A"/>
    <property type="chains" value="m=1-224"/>
</dbReference>
<dbReference type="PDBsum" id="6LUL"/>
<dbReference type="PDBsum" id="6T0B"/>
<dbReference type="PDBsum" id="6T15"/>
<dbReference type="EMDB" id="EMD-10318"/>
<dbReference type="EMDB" id="EMD-10334"/>
<dbReference type="EMDB" id="EMD-10335"/>
<dbReference type="EMDB" id="EMD-10340"/>
<dbReference type="EMDB" id="EMD-10375"/>
<dbReference type="EMDB" id="EMD-10376"/>
<dbReference type="SMR" id="P53721"/>
<dbReference type="BioGRID" id="35843">
    <property type="interactions" value="172"/>
</dbReference>
<dbReference type="DIP" id="DIP-2726N"/>
<dbReference type="FunCoup" id="P53721">
    <property type="interactions" value="121"/>
</dbReference>
<dbReference type="IntAct" id="P53721">
    <property type="interactions" value="34"/>
</dbReference>
<dbReference type="MINT" id="P53721"/>
<dbReference type="STRING" id="4932.YNR018W"/>
<dbReference type="TCDB" id="8.A.112.2.1">
    <property type="family name" value="the respiratory supercomplex factor (rcf) family"/>
</dbReference>
<dbReference type="GlyGen" id="P53721">
    <property type="glycosylation" value="1 site"/>
</dbReference>
<dbReference type="iPTMnet" id="P53721"/>
<dbReference type="PaxDb" id="4932-YNR018W"/>
<dbReference type="PeptideAtlas" id="P53721"/>
<dbReference type="EnsemblFungi" id="YNR018W_mRNA">
    <property type="protein sequence ID" value="YNR018W"/>
    <property type="gene ID" value="YNR018W"/>
</dbReference>
<dbReference type="GeneID" id="855752"/>
<dbReference type="KEGG" id="sce:YNR018W"/>
<dbReference type="AGR" id="SGD:S000005301"/>
<dbReference type="SGD" id="S000005301">
    <property type="gene designation" value="RCF2"/>
</dbReference>
<dbReference type="VEuPathDB" id="FungiDB:YNR018W"/>
<dbReference type="eggNOG" id="ENOG502QT50">
    <property type="taxonomic scope" value="Eukaryota"/>
</dbReference>
<dbReference type="HOGENOM" id="CLU_079101_3_0_1"/>
<dbReference type="InParanoid" id="P53721"/>
<dbReference type="OMA" id="KIITATW"/>
<dbReference type="OrthoDB" id="1915122at2759"/>
<dbReference type="BioCyc" id="YEAST:G3O-33333-MONOMER"/>
<dbReference type="BioGRID-ORCS" id="855752">
    <property type="hits" value="1 hit in 10 CRISPR screens"/>
</dbReference>
<dbReference type="PRO" id="PR:P53721"/>
<dbReference type="Proteomes" id="UP000002311">
    <property type="component" value="Chromosome XIV"/>
</dbReference>
<dbReference type="RNAct" id="P53721">
    <property type="molecule type" value="protein"/>
</dbReference>
<dbReference type="GO" id="GO:0005743">
    <property type="term" value="C:mitochondrial inner membrane"/>
    <property type="evidence" value="ECO:0000314"/>
    <property type="project" value="SGD"/>
</dbReference>
<dbReference type="GO" id="GO:0005739">
    <property type="term" value="C:mitochondrion"/>
    <property type="evidence" value="ECO:0007005"/>
    <property type="project" value="SGD"/>
</dbReference>
<dbReference type="GO" id="GO:0098803">
    <property type="term" value="C:respiratory chain complex"/>
    <property type="evidence" value="ECO:0000314"/>
    <property type="project" value="SGD"/>
</dbReference>
<dbReference type="GO" id="GO:0033617">
    <property type="term" value="P:mitochondrial cytochrome c oxidase assembly"/>
    <property type="evidence" value="ECO:0000316"/>
    <property type="project" value="SGD"/>
</dbReference>
<dbReference type="GO" id="GO:0031334">
    <property type="term" value="P:positive regulation of protein-containing complex assembly"/>
    <property type="evidence" value="ECO:0000314"/>
    <property type="project" value="SGD"/>
</dbReference>
<dbReference type="InterPro" id="IPR007667">
    <property type="entry name" value="Hypoxia_induced_domain"/>
</dbReference>
<dbReference type="InterPro" id="IPR040153">
    <property type="entry name" value="Rcf2"/>
</dbReference>
<dbReference type="PANTHER" id="PTHR28018">
    <property type="entry name" value="RESPIRATORY SUPERCOMPLEX FACTOR 2, MITOCHONDRIAL"/>
    <property type="match status" value="1"/>
</dbReference>
<dbReference type="PANTHER" id="PTHR28018:SF3">
    <property type="entry name" value="RESPIRATORY SUPERCOMPLEX FACTOR 2, MITOCHONDRIAL"/>
    <property type="match status" value="1"/>
</dbReference>
<dbReference type="Pfam" id="PF04588">
    <property type="entry name" value="HIG_1_N"/>
    <property type="match status" value="1"/>
</dbReference>
<dbReference type="PROSITE" id="PS51503">
    <property type="entry name" value="HIG1"/>
    <property type="match status" value="1"/>
</dbReference>